<organism>
    <name type="scientific">Buchnera aphidicola subsp. Acyrthosiphon pisum (strain APS)</name>
    <name type="common">Acyrthosiphon pisum symbiotic bacterium</name>
    <dbReference type="NCBI Taxonomy" id="107806"/>
    <lineage>
        <taxon>Bacteria</taxon>
        <taxon>Pseudomonadati</taxon>
        <taxon>Pseudomonadota</taxon>
        <taxon>Gammaproteobacteria</taxon>
        <taxon>Enterobacterales</taxon>
        <taxon>Erwiniaceae</taxon>
        <taxon>Buchnera</taxon>
    </lineage>
</organism>
<comment type="function">
    <text evidence="1">Chaperone that functions as a gatekeeper on the periplasmic side of the SecYEG translocon. Facilitates the translocation of precursor proteins across SecYEG by interacting with the translocating substrate. Also plays a role in the release of newly synthesized secreted proteins at the periplasmic exit site of the Sec translocon.</text>
</comment>
<comment type="subunit">
    <text evidence="1">Interacts with the SecYEG translocon (By similarity). Binds to the lateral gate of SecY (By similarity). Forms a complex with YfgM (By similarity).</text>
</comment>
<comment type="subcellular location">
    <subcellularLocation>
        <location evidence="1">Cell inner membrane</location>
        <topology evidence="1">Single-pass type II membrane protein</topology>
        <orientation evidence="1">Periplasmic side</orientation>
    </subcellularLocation>
    <text evidence="1">Located at the lateral gate of SecY.</text>
</comment>
<comment type="similarity">
    <text evidence="4">Belongs to the PpiD chaperone family.</text>
</comment>
<evidence type="ECO:0000250" key="1">
    <source>
        <dbReference type="UniProtKB" id="P0ADY1"/>
    </source>
</evidence>
<evidence type="ECO:0000255" key="2"/>
<evidence type="ECO:0000255" key="3">
    <source>
        <dbReference type="PROSITE-ProRule" id="PRU00278"/>
    </source>
</evidence>
<evidence type="ECO:0000305" key="4"/>
<sequence>MTKYSQARLNSIIVKFILGVIILSLILSTISIYINRDFEKYIATVNGEKISFNLFKKMYFIEREKQKKILGKNFFKFSHNENFTKETYNYVLSQLINNVLLEQYAKNMNYLEVNDNTIKKIIYNSPIFQKNNKFSKERYLNYLTSINSTNHEYINIIKKKINTENLIHTISKSNFILKKEEKNIIKLLSQKRIIKKAIVKIDPSIYKKNITNQEAQIYFKKNQDNFYIPEKFKINFVELKTDNFKIHCENKEIYDWYIRNITQYSTKEKRRYSIIQVKNKQQAISILSRLHNTPEDFSKIAQEQSTDPISSKKDGDIGWISIDLIPDEIKHANLNKKNQISDVIPFHNEFLIVKLNETQIGTQKKIYEVFDSIKKQIKQKKSLDLYNELKNKISNNLKNDPGKIERILKENNILIQETDWFDKKSIPKVLNIPILKQFIFNKKLFQKDTTVKPQFHFIVLKKNQSFLIKIKKFKNKEIQHFENVKKNIIKKLRFIKAIKETKKKSEEIIYDLTQGRKKLFKQSNLYFTDPEIISRYDLSAITSIVFSLPHPQKGKKIYTLYNDKNKNFIIISLEKVYNTNFSEKEKNVILEYLSRHNTEIIFNSILKDLREKSIIKYENIVNK</sequence>
<name>PPID_BUCAI</name>
<feature type="chain" id="PRO_0000193420" description="Periplasmic chaperone PpiD">
    <location>
        <begin position="1"/>
        <end position="623"/>
    </location>
</feature>
<feature type="topological domain" description="Cytoplasmic" evidence="1">
    <location>
        <begin position="1"/>
        <end position="11"/>
    </location>
</feature>
<feature type="transmembrane region" description="Helical" evidence="2">
    <location>
        <begin position="12"/>
        <end position="32"/>
    </location>
</feature>
<feature type="topological domain" description="Periplasmic" evidence="1">
    <location>
        <begin position="33"/>
        <end position="623"/>
    </location>
</feature>
<feature type="domain" description="PpiC" evidence="3">
    <location>
        <begin position="267"/>
        <end position="357"/>
    </location>
</feature>
<proteinExistence type="inferred from homology"/>
<gene>
    <name type="primary">ppiD</name>
    <name type="ordered locus">BU478</name>
</gene>
<protein>
    <recommendedName>
        <fullName evidence="1">Periplasmic chaperone PpiD</fullName>
    </recommendedName>
    <alternativeName>
        <fullName evidence="1">Periplasmic folding chaperone</fullName>
    </alternativeName>
</protein>
<reference key="1">
    <citation type="journal article" date="2000" name="Nature">
        <title>Genome sequence of the endocellular bacterial symbiont of aphids Buchnera sp. APS.</title>
        <authorList>
            <person name="Shigenobu S."/>
            <person name="Watanabe H."/>
            <person name="Hattori M."/>
            <person name="Sakaki Y."/>
            <person name="Ishikawa H."/>
        </authorList>
    </citation>
    <scope>NUCLEOTIDE SEQUENCE [LARGE SCALE GENOMIC DNA]</scope>
    <source>
        <strain>APS</strain>
    </source>
</reference>
<dbReference type="EMBL" id="BA000003">
    <property type="protein sequence ID" value="BAB13175.1"/>
    <property type="molecule type" value="Genomic_DNA"/>
</dbReference>
<dbReference type="RefSeq" id="NP_240289.1">
    <property type="nucleotide sequence ID" value="NC_002528.1"/>
</dbReference>
<dbReference type="RefSeq" id="WP_010896137.1">
    <property type="nucleotide sequence ID" value="NC_002528.1"/>
</dbReference>
<dbReference type="SMR" id="P57550"/>
<dbReference type="STRING" id="563178.BUAP5A_471"/>
<dbReference type="EnsemblBacteria" id="BAB13175">
    <property type="protein sequence ID" value="BAB13175"/>
    <property type="gene ID" value="BAB13175"/>
</dbReference>
<dbReference type="KEGG" id="buc:BU478"/>
<dbReference type="PATRIC" id="fig|107806.10.peg.487"/>
<dbReference type="eggNOG" id="COG0760">
    <property type="taxonomic scope" value="Bacteria"/>
</dbReference>
<dbReference type="HOGENOM" id="CLU_023843_1_1_6"/>
<dbReference type="Proteomes" id="UP000001806">
    <property type="component" value="Chromosome"/>
</dbReference>
<dbReference type="GO" id="GO:0005886">
    <property type="term" value="C:plasma membrane"/>
    <property type="evidence" value="ECO:0007669"/>
    <property type="project" value="UniProtKB-SubCell"/>
</dbReference>
<dbReference type="GO" id="GO:0003755">
    <property type="term" value="F:peptidyl-prolyl cis-trans isomerase activity"/>
    <property type="evidence" value="ECO:0007669"/>
    <property type="project" value="InterPro"/>
</dbReference>
<dbReference type="Gene3D" id="3.10.50.40">
    <property type="match status" value="1"/>
</dbReference>
<dbReference type="Gene3D" id="1.10.4030.10">
    <property type="entry name" value="Porin chaperone SurA, peptide-binding domain"/>
    <property type="match status" value="1"/>
</dbReference>
<dbReference type="InterPro" id="IPR046357">
    <property type="entry name" value="PPIase_dom_sf"/>
</dbReference>
<dbReference type="InterPro" id="IPR000297">
    <property type="entry name" value="PPIase_PpiC"/>
</dbReference>
<dbReference type="InterPro" id="IPR052029">
    <property type="entry name" value="PpiD_chaperone"/>
</dbReference>
<dbReference type="InterPro" id="IPR027304">
    <property type="entry name" value="Trigger_fact/SurA_dom_sf"/>
</dbReference>
<dbReference type="PANTHER" id="PTHR47529">
    <property type="entry name" value="PEPTIDYL-PROLYL CIS-TRANS ISOMERASE D"/>
    <property type="match status" value="1"/>
</dbReference>
<dbReference type="PANTHER" id="PTHR47529:SF1">
    <property type="entry name" value="PERIPLASMIC CHAPERONE PPID"/>
    <property type="match status" value="1"/>
</dbReference>
<dbReference type="Pfam" id="PF00639">
    <property type="entry name" value="Rotamase"/>
    <property type="match status" value="1"/>
</dbReference>
<dbReference type="Pfam" id="PF13624">
    <property type="entry name" value="SurA_N_3"/>
    <property type="match status" value="1"/>
</dbReference>
<dbReference type="SUPFAM" id="SSF54534">
    <property type="entry name" value="FKBP-like"/>
    <property type="match status" value="1"/>
</dbReference>
<dbReference type="SUPFAM" id="SSF109998">
    <property type="entry name" value="Triger factor/SurA peptide-binding domain-like"/>
    <property type="match status" value="1"/>
</dbReference>
<dbReference type="PROSITE" id="PS50198">
    <property type="entry name" value="PPIC_PPIASE_2"/>
    <property type="match status" value="1"/>
</dbReference>
<accession>P57550</accession>
<keyword id="KW-0997">Cell inner membrane</keyword>
<keyword id="KW-1003">Cell membrane</keyword>
<keyword id="KW-0143">Chaperone</keyword>
<keyword id="KW-0472">Membrane</keyword>
<keyword id="KW-1185">Reference proteome</keyword>
<keyword id="KW-0812">Transmembrane</keyword>
<keyword id="KW-1133">Transmembrane helix</keyword>